<sequence>MGTASSLVSPAGGEVIEDTYGAGGGEACEIPVEVKPKARLLRNSFRRGAGAAAGAGPGSLPRGVGAGGLLGASFKSTGSSVPELEYAAAEYERLRKEYEIFRVSKNQELLSMGRREAKLDTENKRLRAELQALQKTYQKILREKESALEAKYQAMERAATFEHDRDKVKRQFKIFRETKENEIQDLLRAKRELESKLQRLQAQGIQVFDPGESDSDDNCTDVTAAGTQCEYWTGGALGSEPSIGSMIQLQQSFRGPEFAHSSIDVEGPFANVNRDDWDIAVASLLQVTPLFSHSLWSNTVRCYLIYTDETQPEMDLFLKDYSPKLKRMCETMGYFFHAVYFPIDVENQYLTVRKWEIEKSSLVILFIHLTLPSLLLEDCEEAFLKNPEGKPRLIFHRLEDGKVSSDSVQQLIDQVSNLNKTSKAKIIDHSGDPAEGVYKTYICVEKIIKQDILGFENTDLETKDLGSEDSIPEEDDFGDVLWDIHDEQEQMETFQQASNSAHELGFEKYYQRLNDLVAAPAPIPPLLVSGGPGSGKSLLLSKWIQLQQKNSPNTLILSHFVGRPMSTSSESSLIIKRLTLKLMQHSWSVSALTLDPAKLLEEFPRWLEKLSARHQGSIIIVIDSIDQVQQVEKHMKWLIDPLPVNVRVIVSVNVETCPPAWRLWPTLHLDPLSPKDAKSIIIAECHSVDIKLSKEQEKKLERHCRSATTCNALYVTLFGKMIARAGRAGNLDKILHQCFQCQDTLSLYRLVLHSIRESMANDVDKELMKQILCLVNVSHNGVSESELMELYPEMSWTFLTSLIHSLYKMCLLTYGCGLLRFQHLQAWETVRLEYLEGPTVTSSYRQKLINYFTLQLSQDRVTWRSADELPWLFQQQGSKQKLHDCLLNLFVSQNLYKRGHFAELLSYWQFVGKDKSAMATEYFDSLKQYEKNCEGEDNMSCLADLYETLGRFLKDLGLLSQAIVPLQRSLEIRETALDPDHPRVAQSLHQLASVYVQWKKFGNAEQLYKQALEISENAYGADHPYTARELEALATLYQKQNKYEQAEHFRKKSFKIHQKAIKKKGNLYGFALLRRRALQLEELTLGKDTPDNARTLNELGVLYYLQNNLETADQFLKRSLEMRERVLGPDHPDCAQSLNNLAALCNEKKQYDKAEELYERALDIRRRALAPDHPSLAYTVKHLAILYKKMGKLDKAVPLYELAVEIRQKSFGPKHPSVATALVNLAVLYSQMKKHVEALPLYERALKIYEDSLGRMHPRVGETLKNLAVLSYEGGDFEKAAELYKRAMEIKEAETSLLGGKAPSRHSSSGDTFSLKTAHSPNVFLQQGQR</sequence>
<evidence type="ECO:0000255" key="1"/>
<evidence type="ECO:0000256" key="2">
    <source>
        <dbReference type="SAM" id="MobiDB-lite"/>
    </source>
</evidence>
<evidence type="ECO:0000269" key="3">
    <source>
    </source>
</evidence>
<evidence type="ECO:0000269" key="4">
    <source>
    </source>
</evidence>
<evidence type="ECO:0000269" key="5">
    <source>
    </source>
</evidence>
<evidence type="ECO:0000269" key="6">
    <source>
    </source>
</evidence>
<evidence type="ECO:0000269" key="7">
    <source>
    </source>
</evidence>
<evidence type="ECO:0000269" key="8">
    <source>
    </source>
</evidence>
<evidence type="ECO:0000269" key="9">
    <source>
    </source>
</evidence>
<evidence type="ECO:0000303" key="10">
    <source>
    </source>
</evidence>
<evidence type="ECO:0000303" key="11">
    <source>
    </source>
</evidence>
<evidence type="ECO:0000303" key="12">
    <source>
    </source>
</evidence>
<evidence type="ECO:0000303" key="13">
    <source>
    </source>
</evidence>
<evidence type="ECO:0000303" key="14">
    <source>
    </source>
</evidence>
<evidence type="ECO:0000305" key="15"/>
<evidence type="ECO:0007829" key="16">
    <source>
        <dbReference type="PDB" id="5L7K"/>
    </source>
</evidence>
<accession>Q7Z494</accession>
<accession>Q5JPE3</accession>
<accession>Q5JPE6</accession>
<accession>Q68D99</accession>
<accession>Q6NVH3</accession>
<accession>Q7Z492</accession>
<accession>Q7Z493</accession>
<accession>Q8N9R2</accession>
<accession>Q8NCM5</accession>
<accession>Q96N70</accession>
<accession>Q96NK2</accession>
<dbReference type="EMBL" id="AY257864">
    <property type="protein sequence ID" value="AAP83423.1"/>
    <property type="molecule type" value="mRNA"/>
</dbReference>
<dbReference type="EMBL" id="AY257865">
    <property type="protein sequence ID" value="AAP83424.1"/>
    <property type="molecule type" value="mRNA"/>
</dbReference>
<dbReference type="EMBL" id="AY257866">
    <property type="protein sequence ID" value="AAP83425.1"/>
    <property type="molecule type" value="mRNA"/>
</dbReference>
<dbReference type="EMBL" id="AB082531">
    <property type="protein sequence ID" value="BAC02709.1"/>
    <property type="status" value="ALT_INIT"/>
    <property type="molecule type" value="mRNA"/>
</dbReference>
<dbReference type="EMBL" id="AK055253">
    <property type="protein sequence ID" value="BAB70891.1"/>
    <property type="status" value="ALT_INIT"/>
    <property type="molecule type" value="mRNA"/>
</dbReference>
<dbReference type="EMBL" id="AK055893">
    <property type="protein sequence ID" value="BAB71038.1"/>
    <property type="molecule type" value="mRNA"/>
</dbReference>
<dbReference type="EMBL" id="AK094015">
    <property type="protein sequence ID" value="BAC04268.1"/>
    <property type="status" value="ALT_INIT"/>
    <property type="molecule type" value="mRNA"/>
</dbReference>
<dbReference type="EMBL" id="AL832863">
    <property type="protein sequence ID" value="CAI46200.2"/>
    <property type="molecule type" value="mRNA"/>
</dbReference>
<dbReference type="EMBL" id="AL832877">
    <property type="protein sequence ID" value="CAI46202.1"/>
    <property type="molecule type" value="Transcribed_RNA"/>
</dbReference>
<dbReference type="EMBL" id="CR749498">
    <property type="protein sequence ID" value="CAH18321.1"/>
    <property type="molecule type" value="mRNA"/>
</dbReference>
<dbReference type="EMBL" id="BC068082">
    <property type="protein sequence ID" value="AAH68082.1"/>
    <property type="molecule type" value="mRNA"/>
</dbReference>
<dbReference type="CCDS" id="CCDS3078.1">
    <molecule id="Q7Z494-1"/>
</dbReference>
<dbReference type="RefSeq" id="NP_694972.3">
    <molecule id="Q7Z494-1"/>
    <property type="nucleotide sequence ID" value="NM_153240.4"/>
</dbReference>
<dbReference type="PDB" id="5L7K">
    <property type="method" value="X-ray"/>
    <property type="resolution" value="2.10 A"/>
    <property type="chains" value="B=2-7"/>
</dbReference>
<dbReference type="PDBsum" id="5L7K"/>
<dbReference type="SMR" id="Q7Z494"/>
<dbReference type="BioGRID" id="117962">
    <property type="interactions" value="39"/>
</dbReference>
<dbReference type="CORUM" id="Q7Z494"/>
<dbReference type="FunCoup" id="Q7Z494">
    <property type="interactions" value="493"/>
</dbReference>
<dbReference type="IntAct" id="Q7Z494">
    <property type="interactions" value="31"/>
</dbReference>
<dbReference type="MINT" id="Q7Z494"/>
<dbReference type="STRING" id="9606.ENSP00000338766"/>
<dbReference type="CarbonylDB" id="Q7Z494"/>
<dbReference type="GlyGen" id="Q7Z494">
    <property type="glycosylation" value="2 sites, 1 O-linked glycan (1 site)"/>
</dbReference>
<dbReference type="iPTMnet" id="Q7Z494"/>
<dbReference type="PhosphoSitePlus" id="Q7Z494"/>
<dbReference type="BioMuta" id="NPHP3"/>
<dbReference type="DMDM" id="68565783"/>
<dbReference type="jPOST" id="Q7Z494"/>
<dbReference type="MassIVE" id="Q7Z494"/>
<dbReference type="PaxDb" id="9606-ENSP00000338766"/>
<dbReference type="PeptideAtlas" id="Q7Z494"/>
<dbReference type="ProteomicsDB" id="69163">
    <molecule id="Q7Z494-1"/>
</dbReference>
<dbReference type="ProteomicsDB" id="69164">
    <molecule id="Q7Z494-2"/>
</dbReference>
<dbReference type="ProteomicsDB" id="69165">
    <molecule id="Q7Z494-3"/>
</dbReference>
<dbReference type="ProteomicsDB" id="69166">
    <molecule id="Q7Z494-4"/>
</dbReference>
<dbReference type="ProteomicsDB" id="69167">
    <molecule id="Q7Z494-5"/>
</dbReference>
<dbReference type="ProteomicsDB" id="69168">
    <molecule id="Q7Z494-6"/>
</dbReference>
<dbReference type="ProteomicsDB" id="69169">
    <molecule id="Q7Z494-7"/>
</dbReference>
<dbReference type="Pumba" id="Q7Z494"/>
<dbReference type="Antibodypedia" id="2070">
    <property type="antibodies" value="105 antibodies from 23 providers"/>
</dbReference>
<dbReference type="DNASU" id="27031"/>
<dbReference type="Ensembl" id="ENST00000337331.10">
    <molecule id="Q7Z494-1"/>
    <property type="protein sequence ID" value="ENSP00000338766.5"/>
    <property type="gene ID" value="ENSG00000113971.21"/>
</dbReference>
<dbReference type="Ensembl" id="ENST00000383282.3">
    <molecule id="Q7Z494-7"/>
    <property type="protein sequence ID" value="ENSP00000372769.2"/>
    <property type="gene ID" value="ENSG00000113971.21"/>
</dbReference>
<dbReference type="Ensembl" id="ENST00000683570.1">
    <molecule id="Q7Z494-4"/>
    <property type="protein sequence ID" value="ENSP00000508409.1"/>
    <property type="gene ID" value="ENSG00000113971.21"/>
</dbReference>
<dbReference type="GeneID" id="27031"/>
<dbReference type="KEGG" id="hsa:27031"/>
<dbReference type="MANE-Select" id="ENST00000337331.10">
    <property type="protein sequence ID" value="ENSP00000338766.5"/>
    <property type="RefSeq nucleotide sequence ID" value="NM_153240.5"/>
    <property type="RefSeq protein sequence ID" value="NP_694972.3"/>
</dbReference>
<dbReference type="UCSC" id="uc003epe.3">
    <molecule id="Q7Z494-1"/>
    <property type="organism name" value="human"/>
</dbReference>
<dbReference type="AGR" id="HGNC:7907"/>
<dbReference type="CTD" id="27031"/>
<dbReference type="DisGeNET" id="27031"/>
<dbReference type="GeneCards" id="NPHP3"/>
<dbReference type="GeneReviews" id="NPHP3"/>
<dbReference type="HGNC" id="HGNC:7907">
    <property type="gene designation" value="NPHP3"/>
</dbReference>
<dbReference type="HPA" id="ENSG00000113971">
    <property type="expression patterns" value="Low tissue specificity"/>
</dbReference>
<dbReference type="MalaCards" id="NPHP3"/>
<dbReference type="MIM" id="208540">
    <property type="type" value="phenotype"/>
</dbReference>
<dbReference type="MIM" id="267010">
    <property type="type" value="phenotype"/>
</dbReference>
<dbReference type="MIM" id="604387">
    <property type="type" value="phenotype"/>
</dbReference>
<dbReference type="MIM" id="608002">
    <property type="type" value="gene"/>
</dbReference>
<dbReference type="neXtProt" id="NX_Q7Z494"/>
<dbReference type="OpenTargets" id="ENSG00000113971"/>
<dbReference type="OpenTargets" id="ENSG00000274810"/>
<dbReference type="Orphanet" id="93591">
    <property type="disease" value="Infantile nephronophthisis"/>
</dbReference>
<dbReference type="Orphanet" id="93589">
    <property type="disease" value="Late-onset nephronophthisis"/>
</dbReference>
<dbReference type="Orphanet" id="3032">
    <property type="disease" value="NPHP3-related Meckel-like syndrome"/>
</dbReference>
<dbReference type="Orphanet" id="294415">
    <property type="disease" value="Renal-hepatic-pancreatic dysplasia"/>
</dbReference>
<dbReference type="Orphanet" id="3156">
    <property type="disease" value="Senior-Loken syndrome"/>
</dbReference>
<dbReference type="PharmGKB" id="PA31708"/>
<dbReference type="VEuPathDB" id="HostDB:ENSG00000113971"/>
<dbReference type="eggNOG" id="KOG1840">
    <property type="taxonomic scope" value="Eukaryota"/>
</dbReference>
<dbReference type="GeneTree" id="ENSGT00940000156398"/>
<dbReference type="HOGENOM" id="CLU_1744706_0_0_1"/>
<dbReference type="InParanoid" id="Q7Z494"/>
<dbReference type="OMA" id="TWHEENP"/>
<dbReference type="OrthoDB" id="626167at2759"/>
<dbReference type="PAN-GO" id="Q7Z494">
    <property type="GO annotations" value="6 GO annotations based on evolutionary models"/>
</dbReference>
<dbReference type="PhylomeDB" id="Q7Z494"/>
<dbReference type="TreeFam" id="TF314010"/>
<dbReference type="PathwayCommons" id="Q7Z494"/>
<dbReference type="Reactome" id="R-HSA-5624138">
    <property type="pathway name" value="Trafficking of myristoylated proteins to the cilium"/>
</dbReference>
<dbReference type="SignaLink" id="Q7Z494"/>
<dbReference type="BioGRID-ORCS" id="27031">
    <property type="hits" value="36 hits in 1151 CRISPR screens"/>
</dbReference>
<dbReference type="GeneWiki" id="NPHP3"/>
<dbReference type="GenomeRNAi" id="27031"/>
<dbReference type="Pharos" id="Q7Z494">
    <property type="development level" value="Tbio"/>
</dbReference>
<dbReference type="PRO" id="PR:Q7Z494"/>
<dbReference type="Proteomes" id="UP000005640">
    <property type="component" value="Chromosome 3"/>
</dbReference>
<dbReference type="RNAct" id="Q7Z494">
    <property type="molecule type" value="protein"/>
</dbReference>
<dbReference type="Bgee" id="ENSG00000113971">
    <property type="expression patterns" value="Expressed in superficial temporal artery and 190 other cell types or tissues"/>
</dbReference>
<dbReference type="ExpressionAtlas" id="Q7Z494">
    <property type="expression patterns" value="baseline and differential"/>
</dbReference>
<dbReference type="GO" id="GO:0097546">
    <property type="term" value="C:ciliary base"/>
    <property type="evidence" value="ECO:0000318"/>
    <property type="project" value="GO_Central"/>
</dbReference>
<dbReference type="GO" id="GO:0097543">
    <property type="term" value="C:ciliary inversin compartment"/>
    <property type="evidence" value="ECO:0000318"/>
    <property type="project" value="GO_Central"/>
</dbReference>
<dbReference type="GO" id="GO:0005929">
    <property type="term" value="C:cilium"/>
    <property type="evidence" value="ECO:0000314"/>
    <property type="project" value="UniProtKB"/>
</dbReference>
<dbReference type="GO" id="GO:0005829">
    <property type="term" value="C:cytosol"/>
    <property type="evidence" value="ECO:0000304"/>
    <property type="project" value="Reactome"/>
</dbReference>
<dbReference type="GO" id="GO:0005576">
    <property type="term" value="C:extracellular region"/>
    <property type="evidence" value="ECO:0007669"/>
    <property type="project" value="GOC"/>
</dbReference>
<dbReference type="GO" id="GO:0003283">
    <property type="term" value="P:atrial septum development"/>
    <property type="evidence" value="ECO:0000315"/>
    <property type="project" value="BHF-UCL"/>
</dbReference>
<dbReference type="GO" id="GO:0060271">
    <property type="term" value="P:cilium assembly"/>
    <property type="evidence" value="ECO:0000250"/>
    <property type="project" value="UniProtKB"/>
</dbReference>
<dbReference type="GO" id="GO:0060026">
    <property type="term" value="P:convergent extension"/>
    <property type="evidence" value="ECO:0000318"/>
    <property type="project" value="GO_Central"/>
</dbReference>
<dbReference type="GO" id="GO:0060027">
    <property type="term" value="P:convergent extension involved in gastrulation"/>
    <property type="evidence" value="ECO:0000316"/>
    <property type="project" value="BHF-UCL"/>
</dbReference>
<dbReference type="GO" id="GO:0071908">
    <property type="term" value="P:determination of intestine left/right asymmetry"/>
    <property type="evidence" value="ECO:0000315"/>
    <property type="project" value="BHF-UCL"/>
</dbReference>
<dbReference type="GO" id="GO:0007368">
    <property type="term" value="P:determination of left/right symmetry"/>
    <property type="evidence" value="ECO:0000315"/>
    <property type="project" value="BHF-UCL"/>
</dbReference>
<dbReference type="GO" id="GO:0071910">
    <property type="term" value="P:determination of liver left/right asymmetry"/>
    <property type="evidence" value="ECO:0000315"/>
    <property type="project" value="BHF-UCL"/>
</dbReference>
<dbReference type="GO" id="GO:0035469">
    <property type="term" value="P:determination of pancreatic left/right asymmetry"/>
    <property type="evidence" value="ECO:0000315"/>
    <property type="project" value="BHF-UCL"/>
</dbReference>
<dbReference type="GO" id="GO:0071909">
    <property type="term" value="P:determination of stomach left/right asymmetry"/>
    <property type="evidence" value="ECO:0000315"/>
    <property type="project" value="BHF-UCL"/>
</dbReference>
<dbReference type="GO" id="GO:0060287">
    <property type="term" value="P:epithelial cilium movement involved in determination of left/right asymmetry"/>
    <property type="evidence" value="ECO:0000305"/>
    <property type="project" value="BHF-UCL"/>
</dbReference>
<dbReference type="GO" id="GO:0007163">
    <property type="term" value="P:establishment or maintenance of cell polarity"/>
    <property type="evidence" value="ECO:0007669"/>
    <property type="project" value="Ensembl"/>
</dbReference>
<dbReference type="GO" id="GO:0030198">
    <property type="term" value="P:extracellular matrix organization"/>
    <property type="evidence" value="ECO:0007669"/>
    <property type="project" value="Ensembl"/>
</dbReference>
<dbReference type="GO" id="GO:0001947">
    <property type="term" value="P:heart looping"/>
    <property type="evidence" value="ECO:0000315"/>
    <property type="project" value="BHF-UCL"/>
</dbReference>
<dbReference type="GO" id="GO:0001822">
    <property type="term" value="P:kidney development"/>
    <property type="evidence" value="ECO:0000315"/>
    <property type="project" value="BHF-UCL"/>
</dbReference>
<dbReference type="GO" id="GO:0060993">
    <property type="term" value="P:kidney morphogenesis"/>
    <property type="evidence" value="ECO:0000315"/>
    <property type="project" value="BHF-UCL"/>
</dbReference>
<dbReference type="GO" id="GO:0006629">
    <property type="term" value="P:lipid metabolic process"/>
    <property type="evidence" value="ECO:0007669"/>
    <property type="project" value="Ensembl"/>
</dbReference>
<dbReference type="GO" id="GO:0030324">
    <property type="term" value="P:lung development"/>
    <property type="evidence" value="ECO:0000315"/>
    <property type="project" value="BHF-UCL"/>
</dbReference>
<dbReference type="GO" id="GO:0048496">
    <property type="term" value="P:maintenance of animal organ identity"/>
    <property type="evidence" value="ECO:0000315"/>
    <property type="project" value="HGNC-UCL"/>
</dbReference>
<dbReference type="GO" id="GO:0090090">
    <property type="term" value="P:negative regulation of canonical Wnt signaling pathway"/>
    <property type="evidence" value="ECO:0000314"/>
    <property type="project" value="UniProtKB"/>
</dbReference>
<dbReference type="GO" id="GO:1905515">
    <property type="term" value="P:non-motile cilium assembly"/>
    <property type="evidence" value="ECO:0007669"/>
    <property type="project" value="Ensembl"/>
</dbReference>
<dbReference type="GO" id="GO:0045494">
    <property type="term" value="P:photoreceptor cell maintenance"/>
    <property type="evidence" value="ECO:0000315"/>
    <property type="project" value="HGNC-UCL"/>
</dbReference>
<dbReference type="GO" id="GO:2000095">
    <property type="term" value="P:regulation of Wnt signaling pathway, planar cell polarity pathway"/>
    <property type="evidence" value="ECO:0000314"/>
    <property type="project" value="BHF-UCL"/>
</dbReference>
<dbReference type="GO" id="GO:0072189">
    <property type="term" value="P:ureter development"/>
    <property type="evidence" value="ECO:0000315"/>
    <property type="project" value="BHF-UCL"/>
</dbReference>
<dbReference type="GO" id="GO:0016055">
    <property type="term" value="P:Wnt signaling pathway"/>
    <property type="evidence" value="ECO:0007669"/>
    <property type="project" value="UniProtKB-KW"/>
</dbReference>
<dbReference type="FunFam" id="1.25.40.10:FF:000150">
    <property type="entry name" value="Nephrocystin-3"/>
    <property type="match status" value="1"/>
</dbReference>
<dbReference type="FunFam" id="1.25.40.10:FF:000362">
    <property type="entry name" value="Nephrocystin-3"/>
    <property type="match status" value="1"/>
</dbReference>
<dbReference type="FunFam" id="3.40.50.300:FF:000693">
    <property type="entry name" value="Nephrocystin-3"/>
    <property type="match status" value="1"/>
</dbReference>
<dbReference type="FunFam" id="1.25.40.10:FF:000301">
    <property type="entry name" value="Nephronophthisis 3"/>
    <property type="match status" value="1"/>
</dbReference>
<dbReference type="Gene3D" id="3.40.50.300">
    <property type="entry name" value="P-loop containing nucleotide triphosphate hydrolases"/>
    <property type="match status" value="1"/>
</dbReference>
<dbReference type="Gene3D" id="1.25.40.10">
    <property type="entry name" value="Tetratricopeptide repeat domain"/>
    <property type="match status" value="3"/>
</dbReference>
<dbReference type="InterPro" id="IPR056884">
    <property type="entry name" value="NPHP3-like_N"/>
</dbReference>
<dbReference type="InterPro" id="IPR056886">
    <property type="entry name" value="NPHP3_ab_dom"/>
</dbReference>
<dbReference type="InterPro" id="IPR056883">
    <property type="entry name" value="NPHP3_hel"/>
</dbReference>
<dbReference type="InterPro" id="IPR027417">
    <property type="entry name" value="P-loop_NTPase"/>
</dbReference>
<dbReference type="InterPro" id="IPR011990">
    <property type="entry name" value="TPR-like_helical_dom_sf"/>
</dbReference>
<dbReference type="InterPro" id="IPR056885">
    <property type="entry name" value="TPR_NPHP3"/>
</dbReference>
<dbReference type="InterPro" id="IPR019734">
    <property type="entry name" value="TPR_rpt"/>
</dbReference>
<dbReference type="PANTHER" id="PTHR45641:SF19">
    <property type="entry name" value="NEPHROCYSTIN-3"/>
    <property type="match status" value="1"/>
</dbReference>
<dbReference type="PANTHER" id="PTHR45641">
    <property type="entry name" value="TETRATRICOPEPTIDE REPEAT PROTEIN (AFU_ORTHOLOGUE AFUA_6G03870)"/>
    <property type="match status" value="1"/>
</dbReference>
<dbReference type="Pfam" id="PF25022">
    <property type="entry name" value="NPHP3"/>
    <property type="match status" value="1"/>
</dbReference>
<dbReference type="Pfam" id="PF24884">
    <property type="entry name" value="NPHP3_hel"/>
    <property type="match status" value="1"/>
</dbReference>
<dbReference type="Pfam" id="PF24883">
    <property type="entry name" value="NPHP3_N"/>
    <property type="match status" value="1"/>
</dbReference>
<dbReference type="Pfam" id="PF13424">
    <property type="entry name" value="TPR_12"/>
    <property type="match status" value="2"/>
</dbReference>
<dbReference type="Pfam" id="PF13176">
    <property type="entry name" value="TPR_7"/>
    <property type="match status" value="1"/>
</dbReference>
<dbReference type="Pfam" id="PF24885">
    <property type="entry name" value="TPR_NPHP3"/>
    <property type="match status" value="1"/>
</dbReference>
<dbReference type="SMART" id="SM00028">
    <property type="entry name" value="TPR"/>
    <property type="match status" value="8"/>
</dbReference>
<dbReference type="SUPFAM" id="SSF52540">
    <property type="entry name" value="P-loop containing nucleoside triphosphate hydrolases"/>
    <property type="match status" value="1"/>
</dbReference>
<dbReference type="SUPFAM" id="SSF48452">
    <property type="entry name" value="TPR-like"/>
    <property type="match status" value="2"/>
</dbReference>
<dbReference type="PROSITE" id="PS50005">
    <property type="entry name" value="TPR"/>
    <property type="match status" value="8"/>
</dbReference>
<dbReference type="PROSITE" id="PS50293">
    <property type="entry name" value="TPR_REGION"/>
    <property type="match status" value="1"/>
</dbReference>
<organism>
    <name type="scientific">Homo sapiens</name>
    <name type="common">Human</name>
    <dbReference type="NCBI Taxonomy" id="9606"/>
    <lineage>
        <taxon>Eukaryota</taxon>
        <taxon>Metazoa</taxon>
        <taxon>Chordata</taxon>
        <taxon>Craniata</taxon>
        <taxon>Vertebrata</taxon>
        <taxon>Euteleostomi</taxon>
        <taxon>Mammalia</taxon>
        <taxon>Eutheria</taxon>
        <taxon>Euarchontoglires</taxon>
        <taxon>Primates</taxon>
        <taxon>Haplorrhini</taxon>
        <taxon>Catarrhini</taxon>
        <taxon>Hominidae</taxon>
        <taxon>Homo</taxon>
    </lineage>
</organism>
<name>NPHP3_HUMAN</name>
<comment type="function">
    <text evidence="4">Required for normal ciliary development and function. Inhibits disheveled-1-induced canonical Wnt-signaling activity and may also play a role in the control of non-canonical Wnt signaling which regulates planar cell polarity. Probably acts as a molecular switch between different Wnt signaling pathways. Required for proper convergent extension cell movements.</text>
</comment>
<comment type="subunit">
    <text evidence="3 4 6 7 8 9">Interacts with NPHP1 and INVS/NPHP2. Interacts (when myristoylated) with UNC119 and UNC119B; interaction is required for localization to cilium. Interacts with CEP164. Component of a complex containing at least ANKS6, INVS, NEK8 and NPHP3. ANKS6 may organize complex assembly by linking INVS and NPHP3 to NEK8 and INVS may target the complex to the proximal ciliary axoneme.</text>
</comment>
<comment type="interaction">
    <interactant intactId="EBI-2804263">
        <id>Q7Z494</id>
    </interactant>
    <interactant intactId="EBI-3937015">
        <id>Q9UPV0</id>
        <label>CEP164</label>
    </interactant>
    <organismsDiffer>false</organismsDiffer>
    <experiments>2</experiments>
</comment>
<comment type="interaction">
    <interactant intactId="EBI-2804263">
        <id>Q7Z494</id>
    </interactant>
    <interactant intactId="EBI-353675">
        <id>Q9Y265</id>
        <label>RUVBL1</label>
    </interactant>
    <organismsDiffer>false</organismsDiffer>
    <experiments>2</experiments>
</comment>
<comment type="interaction">
    <interactant intactId="EBI-2804263">
        <id>Q7Z494</id>
    </interactant>
    <interactant intactId="EBI-711260">
        <id>Q13432</id>
        <label>UNC119</label>
    </interactant>
    <organismsDiffer>false</organismsDiffer>
    <experiments>6</experiments>
</comment>
<comment type="interaction">
    <interactant intactId="EBI-2804263">
        <id>Q7Z494</id>
    </interactant>
    <interactant intactId="EBI-8045435">
        <id>A6NIH7</id>
        <label>UNC119B</label>
    </interactant>
    <organismsDiffer>false</organismsDiffer>
    <experiments>3</experiments>
</comment>
<comment type="subcellular location">
    <subcellularLocation>
        <location evidence="5 6">Cell projection</location>
        <location evidence="5 6">Cilium</location>
    </subcellularLocation>
    <text>Localization to cilium is mediated via interaction with UNC119 and UNC119B, which bind to the myristoyl moiety of the N-terminus.</text>
</comment>
<comment type="alternative products">
    <event type="alternative splicing"/>
    <isoform>
        <id>Q7Z494-1</id>
        <name>1</name>
        <sequence type="displayed"/>
    </isoform>
    <isoform>
        <id>Q7Z494-2</id>
        <name>2</name>
        <sequence type="described" ref="VSP_014480 VSP_014481"/>
    </isoform>
    <isoform>
        <id>Q7Z494-3</id>
        <name>3</name>
        <sequence type="described" ref="VSP_014488 VSP_014489"/>
    </isoform>
    <isoform>
        <id>Q7Z494-4</id>
        <name>4</name>
        <sequence type="described" ref="VSP_014482 VSP_014483"/>
    </isoform>
    <isoform>
        <id>Q7Z494-5</id>
        <name>5</name>
        <sequence type="described" ref="VSP_014486 VSP_014487"/>
    </isoform>
    <isoform>
        <id>Q7Z494-6</id>
        <name>6</name>
        <sequence type="described" ref="VSP_014490 VSP_014491"/>
    </isoform>
    <isoform>
        <id>Q7Z494-7</id>
        <name>7</name>
        <sequence type="described" ref="VSP_014484 VSP_014485"/>
    </isoform>
    <text>Additional isoforms seem to exist.</text>
</comment>
<comment type="tissue specificity">
    <text evidence="3">Widely expressed at low level. Expressed in heart, placenta, liver, skeletal muscle, kidney and pancreas. Expressed at very low level in brain and lung.</text>
</comment>
<comment type="disease" evidence="3">
    <disease id="DI-00805">
        <name>Nephronophthisis 3</name>
        <acronym>NPHP3</acronym>
        <description>An autosomal recessive disorder resulting in end-stage renal disease. It is characterized by polyuria, polydipsia, anemia. Onset of terminal renal failure occurr significantly later (median age, 19 years) than in juvenile nephronophthisis. Renal pathology is characterized by alterations of tubular basement membranes, tubular atrophy and dilation, sclerosing tubulointerstitial nephropathy, and renal cyst development predominantly at the corticomedullary junction.</description>
        <dbReference type="MIM" id="604387"/>
    </disease>
    <text>The disease is caused by variants affecting the gene represented in this entry.</text>
</comment>
<comment type="disease" evidence="4">
    <disease id="DI-02259">
        <name>Renal-hepatic-pancreatic dysplasia 1</name>
        <acronym>RHPD1</acronym>
        <description>A disease characterized by cystic malformations of the kidneys, liver, and pancreas. The pathological findings consist of multicystic dysplastic kidneys, dilated and dysgenetic bile ducts, a dysplastic pancreas with dilated ducts, cysts, fibrosis and inflammatory infiltrates.</description>
        <dbReference type="MIM" id="208540"/>
    </disease>
    <text>The disease is caused by variants affecting the gene represented in this entry.</text>
</comment>
<comment type="disease" evidence="4">
    <disease id="DI-02861">
        <name>Meckel syndrome 7</name>
        <acronym>MKS7</acronym>
        <description>A disorder characterized by a combination of renal cysts and variably associated features including developmental anomalies of the central nervous system (typically encephalocele), hepatic ductal dysplasia and cysts, and polydactyly.</description>
        <dbReference type="MIM" id="267010"/>
    </disease>
    <text>The disease is caused by variants affecting the gene represented in this entry.</text>
</comment>
<comment type="sequence caution" evidence="15">
    <conflict type="erroneous initiation">
        <sequence resource="EMBL-CDS" id="BAB70891"/>
    </conflict>
    <text>Truncated N-terminus.</text>
</comment>
<comment type="sequence caution" evidence="15">
    <conflict type="erroneous initiation">
        <sequence resource="EMBL-CDS" id="BAC02709"/>
    </conflict>
    <text>Extended N-terminus.</text>
</comment>
<comment type="sequence caution" evidence="15">
    <conflict type="erroneous initiation">
        <sequence resource="EMBL-CDS" id="BAC04268"/>
    </conflict>
    <text>Truncated N-terminus.</text>
</comment>
<feature type="initiator methionine" description="Removed">
    <location>
        <position position="1"/>
    </location>
</feature>
<feature type="chain" id="PRO_0000106301" description="Nephrocystin-3">
    <location>
        <begin position="2"/>
        <end position="1330"/>
    </location>
</feature>
<feature type="repeat" description="TPR 1">
    <location>
        <begin position="471"/>
        <end position="504"/>
    </location>
</feature>
<feature type="repeat" description="TPR 2">
    <location>
        <begin position="885"/>
        <end position="918"/>
    </location>
</feature>
<feature type="repeat" description="TPR 3">
    <location>
        <begin position="920"/>
        <end position="942"/>
    </location>
</feature>
<feature type="repeat" description="TPR 4">
    <location>
        <begin position="943"/>
        <end position="976"/>
    </location>
</feature>
<feature type="repeat" description="TPR 5">
    <location>
        <begin position="985"/>
        <end position="1018"/>
    </location>
</feature>
<feature type="repeat" description="TPR 6">
    <location>
        <begin position="1027"/>
        <end position="1060"/>
    </location>
</feature>
<feature type="repeat" description="TPR 7">
    <location>
        <begin position="1093"/>
        <end position="1126"/>
    </location>
</feature>
<feature type="repeat" description="TPR 8">
    <location>
        <begin position="1135"/>
        <end position="1168"/>
    </location>
</feature>
<feature type="repeat" description="TPR 9">
    <location>
        <begin position="1177"/>
        <end position="1210"/>
    </location>
</feature>
<feature type="repeat" description="TPR 10">
    <location>
        <begin position="1219"/>
        <end position="1252"/>
    </location>
</feature>
<feature type="repeat" description="TPR 11">
    <location>
        <begin position="1261"/>
        <end position="1294"/>
    </location>
</feature>
<feature type="region of interest" description="Disordered" evidence="2">
    <location>
        <begin position="1296"/>
        <end position="1330"/>
    </location>
</feature>
<feature type="coiled-coil region" evidence="1">
    <location>
        <begin position="83"/>
        <end position="207"/>
    </location>
</feature>
<feature type="compositionally biased region" description="Polar residues" evidence="2">
    <location>
        <begin position="1305"/>
        <end position="1330"/>
    </location>
</feature>
<feature type="lipid moiety-binding region" description="N-myristoyl glycine" evidence="6">
    <location>
        <position position="2"/>
    </location>
</feature>
<feature type="splice variant" id="VSP_014480" description="In isoform 2." evidence="10">
    <location>
        <begin position="1"/>
        <end position="720"/>
    </location>
</feature>
<feature type="splice variant" id="VSP_014482" description="In isoform 4." evidence="12">
    <original>ALQKTYQKILREKESALEAKYQAMERAATFEHDRDKVKRQFKIFRETKEN</original>
    <variation>VTPGWAATPGDPWEARPSCSLSKPSGFESSAETAHFNLRGHILFESEMIP</variation>
    <location>
        <begin position="132"/>
        <end position="181"/>
    </location>
</feature>
<feature type="splice variant" id="VSP_014484" description="In isoform 7." evidence="13">
    <original>ALQKTYQKILREKESALEA</original>
    <variation>GLAAVARSRLTATWNSWAQ</variation>
    <location>
        <begin position="132"/>
        <end position="150"/>
    </location>
</feature>
<feature type="splice variant" id="VSP_014485" description="In isoform 7." evidence="13">
    <location>
        <begin position="151"/>
        <end position="1330"/>
    </location>
</feature>
<feature type="splice variant" id="VSP_014483" description="In isoform 4." evidence="12">
    <location>
        <begin position="182"/>
        <end position="1330"/>
    </location>
</feature>
<feature type="splice variant" id="VSP_014486" description="In isoform 5." evidence="11">
    <original>AAGTQCEYWTGGALGS</original>
    <variation>VSLESDQHPGIFIANF</variation>
    <location>
        <begin position="224"/>
        <end position="239"/>
    </location>
</feature>
<feature type="splice variant" id="VSP_014487" description="In isoform 5." evidence="11">
    <location>
        <begin position="240"/>
        <end position="1330"/>
    </location>
</feature>
<feature type="splice variant" id="VSP_014488" description="In isoform 3." evidence="11 14">
    <original>QVEKHMK</original>
    <variation>VVAYTSS</variation>
    <location>
        <begin position="630"/>
        <end position="636"/>
    </location>
</feature>
<feature type="splice variant" id="VSP_014489" description="In isoform 3." evidence="11 14">
    <location>
        <begin position="637"/>
        <end position="1330"/>
    </location>
</feature>
<feature type="splice variant" id="VSP_014490" description="In isoform 6." evidence="14">
    <original>EKKLERHC</original>
    <variation>CWESRQFR</variation>
    <location>
        <begin position="697"/>
        <end position="704"/>
    </location>
</feature>
<feature type="splice variant" id="VSP_014491" description="In isoform 6." evidence="14">
    <location>
        <begin position="705"/>
        <end position="1330"/>
    </location>
</feature>
<feature type="splice variant" id="VSP_014481" description="In isoform 2." evidence="10">
    <original>R</original>
    <variation>RKVQSNLLSPEGLSNICAQEKTTRFTSS</variation>
    <location>
        <position position="1330"/>
    </location>
</feature>
<feature type="sequence variant" id="VAR_022815" description="In NPHP3; dbSNP:rs119456960." evidence="3">
    <original>S</original>
    <variation>T</variation>
    <location>
        <position position="360"/>
    </location>
</feature>
<feature type="sequence variant" id="VAR_022816" description="In NPHP3; dbSNP:rs142021049." evidence="3">
    <original>N</original>
    <variation>S</variation>
    <location>
        <position position="386"/>
    </location>
</feature>
<feature type="sequence variant" id="VAR_022817" description="In NPHP3; dbSNP:rs755094682." evidence="3">
    <original>R</original>
    <variation>H</variation>
    <location>
        <position position="397"/>
    </location>
</feature>
<feature type="sequence variant" id="VAR_044121" description="In RHPD1; dbSNP:rs119456963." evidence="4">
    <original>R</original>
    <variation>Q</variation>
    <location>
        <position position="973"/>
    </location>
</feature>
<feature type="sequence variant" id="VAR_022818" description="In NPHP3; dbSNP:rs1057521090." evidence="3">
    <original>L</original>
    <variation>P</variation>
    <location>
        <position position="1141"/>
    </location>
</feature>
<feature type="sequence variant" id="VAR_022819" description="In NPHP3; dbSNP:rs202048210." evidence="3">
    <original>A</original>
    <variation>V</variation>
    <location>
        <position position="1221"/>
    </location>
</feature>
<feature type="sequence variant" id="VAR_022820" description="In NPHP3; dbSNP:rs143451766." evidence="3">
    <original>S</original>
    <variation>R</variation>
    <location>
        <position position="1252"/>
    </location>
</feature>
<feature type="sequence variant" id="VAR_044122" description="In dbSNP:rs35485382.">
    <original>R</original>
    <variation>C</variation>
    <location>
        <position position="1305"/>
    </location>
</feature>
<feature type="sequence variant" id="VAR_022821" description="In NPHP3; likely benign; dbSNP:rs75316802." evidence="3">
    <original>S</original>
    <variation>T</variation>
    <location>
        <position position="1314"/>
    </location>
</feature>
<feature type="sequence conflict" description="In Ref. 4; CAI46202." evidence="15" ref="4">
    <original>T</original>
    <variation>TT</variation>
    <location>
        <position position="223"/>
    </location>
</feature>
<feature type="helix" evidence="16">
    <location>
        <begin position="3"/>
        <end position="6"/>
    </location>
</feature>
<proteinExistence type="evidence at protein level"/>
<reference key="1">
    <citation type="journal article" date="2003" name="Nat. Genet.">
        <title>Mutations in a novel gene, NPHP3, cause adolescent nephronophthisis, tapeto-retinal degeneration and hepatic fibrosis.</title>
        <authorList>
            <person name="Olbrich H."/>
            <person name="Fliegauf M."/>
            <person name="Hoefele J."/>
            <person name="Kispert A."/>
            <person name="Otto E."/>
            <person name="Volz A."/>
            <person name="Wolf M.T."/>
            <person name="Sasmaz G."/>
            <person name="Trauer U."/>
            <person name="Reinhardt R."/>
            <person name="Sudbrak R."/>
            <person name="Antignac C."/>
            <person name="Gretz N."/>
            <person name="Walz G."/>
            <person name="Schermer B."/>
            <person name="Benzing T."/>
            <person name="Hildebrandt F."/>
            <person name="Omran H."/>
        </authorList>
    </citation>
    <scope>NUCLEOTIDE SEQUENCE [MRNA] (ISOFORM 1)</scope>
    <scope>NUCLEOTIDE SEQUENCE [MRNA] OF 117-1330</scope>
    <scope>NUCLEOTIDE SEQUENCE [MRNA] (ISOFORM 5)</scope>
    <scope>NUCLEOTIDE SEQUENCE [MRNA] OF 584-1330 (ISOFORM 3)</scope>
    <scope>INTERACTION WITH NPHP1</scope>
    <scope>TISSUE SPECIFICITY</scope>
    <scope>VARIANTS NPHP3 THR-360; SER-386; HIS-397; PRO-1141; VAL-1221; ARG-1252 AND THR-1314</scope>
</reference>
<reference key="2">
    <citation type="journal article" date="2002" name="DNA Res.">
        <title>Characterization of size-fractionated cDNA libraries generated by the in vitro recombination-assisted method.</title>
        <authorList>
            <person name="Ohara O."/>
            <person name="Nagase T."/>
            <person name="Mitsui G."/>
            <person name="Kohga H."/>
            <person name="Kikuno R."/>
            <person name="Hiraoka S."/>
            <person name="Takahashi Y."/>
            <person name="Kitajima S."/>
            <person name="Saga Y."/>
            <person name="Koseki H."/>
        </authorList>
    </citation>
    <scope>NUCLEOTIDE SEQUENCE [LARGE SCALE MRNA] (ISOFORM 2)</scope>
    <source>
        <tissue>Brain</tissue>
    </source>
</reference>
<reference key="3">
    <citation type="journal article" date="2004" name="Nat. Genet.">
        <title>Complete sequencing and characterization of 21,243 full-length human cDNAs.</title>
        <authorList>
            <person name="Ota T."/>
            <person name="Suzuki Y."/>
            <person name="Nishikawa T."/>
            <person name="Otsuki T."/>
            <person name="Sugiyama T."/>
            <person name="Irie R."/>
            <person name="Wakamatsu A."/>
            <person name="Hayashi K."/>
            <person name="Sato H."/>
            <person name="Nagai K."/>
            <person name="Kimura K."/>
            <person name="Makita H."/>
            <person name="Sekine M."/>
            <person name="Obayashi M."/>
            <person name="Nishi T."/>
            <person name="Shibahara T."/>
            <person name="Tanaka T."/>
            <person name="Ishii S."/>
            <person name="Yamamoto J."/>
            <person name="Saito K."/>
            <person name="Kawai Y."/>
            <person name="Isono Y."/>
            <person name="Nakamura Y."/>
            <person name="Nagahari K."/>
            <person name="Murakami K."/>
            <person name="Yasuda T."/>
            <person name="Iwayanagi T."/>
            <person name="Wagatsuma M."/>
            <person name="Shiratori A."/>
            <person name="Sudo H."/>
            <person name="Hosoiri T."/>
            <person name="Kaku Y."/>
            <person name="Kodaira H."/>
            <person name="Kondo H."/>
            <person name="Sugawara M."/>
            <person name="Takahashi M."/>
            <person name="Kanda K."/>
            <person name="Yokoi T."/>
            <person name="Furuya T."/>
            <person name="Kikkawa E."/>
            <person name="Omura Y."/>
            <person name="Abe K."/>
            <person name="Kamihara K."/>
            <person name="Katsuta N."/>
            <person name="Sato K."/>
            <person name="Tanikawa M."/>
            <person name="Yamazaki M."/>
            <person name="Ninomiya K."/>
            <person name="Ishibashi T."/>
            <person name="Yamashita H."/>
            <person name="Murakawa K."/>
            <person name="Fujimori K."/>
            <person name="Tanai H."/>
            <person name="Kimata M."/>
            <person name="Watanabe M."/>
            <person name="Hiraoka S."/>
            <person name="Chiba Y."/>
            <person name="Ishida S."/>
            <person name="Ono Y."/>
            <person name="Takiguchi S."/>
            <person name="Watanabe S."/>
            <person name="Yosida M."/>
            <person name="Hotuta T."/>
            <person name="Kusano J."/>
            <person name="Kanehori K."/>
            <person name="Takahashi-Fujii A."/>
            <person name="Hara H."/>
            <person name="Tanase T.-O."/>
            <person name="Nomura Y."/>
            <person name="Togiya S."/>
            <person name="Komai F."/>
            <person name="Hara R."/>
            <person name="Takeuchi K."/>
            <person name="Arita M."/>
            <person name="Imose N."/>
            <person name="Musashino K."/>
            <person name="Yuuki H."/>
            <person name="Oshima A."/>
            <person name="Sasaki N."/>
            <person name="Aotsuka S."/>
            <person name="Yoshikawa Y."/>
            <person name="Matsunawa H."/>
            <person name="Ichihara T."/>
            <person name="Shiohata N."/>
            <person name="Sano S."/>
            <person name="Moriya S."/>
            <person name="Momiyama H."/>
            <person name="Satoh N."/>
            <person name="Takami S."/>
            <person name="Terashima Y."/>
            <person name="Suzuki O."/>
            <person name="Nakagawa S."/>
            <person name="Senoh A."/>
            <person name="Mizoguchi H."/>
            <person name="Goto Y."/>
            <person name="Shimizu F."/>
            <person name="Wakebe H."/>
            <person name="Hishigaki H."/>
            <person name="Watanabe T."/>
            <person name="Sugiyama A."/>
            <person name="Takemoto M."/>
            <person name="Kawakami B."/>
            <person name="Yamazaki M."/>
            <person name="Watanabe K."/>
            <person name="Kumagai A."/>
            <person name="Itakura S."/>
            <person name="Fukuzumi Y."/>
            <person name="Fujimori Y."/>
            <person name="Komiyama M."/>
            <person name="Tashiro H."/>
            <person name="Tanigami A."/>
            <person name="Fujiwara T."/>
            <person name="Ono T."/>
            <person name="Yamada K."/>
            <person name="Fujii Y."/>
            <person name="Ozaki K."/>
            <person name="Hirao M."/>
            <person name="Ohmori Y."/>
            <person name="Kawabata A."/>
            <person name="Hikiji T."/>
            <person name="Kobatake N."/>
            <person name="Inagaki H."/>
            <person name="Ikema Y."/>
            <person name="Okamoto S."/>
            <person name="Okitani R."/>
            <person name="Kawakami T."/>
            <person name="Noguchi S."/>
            <person name="Itoh T."/>
            <person name="Shigeta K."/>
            <person name="Senba T."/>
            <person name="Matsumura K."/>
            <person name="Nakajima Y."/>
            <person name="Mizuno T."/>
            <person name="Morinaga M."/>
            <person name="Sasaki M."/>
            <person name="Togashi T."/>
            <person name="Oyama M."/>
            <person name="Hata H."/>
            <person name="Watanabe M."/>
            <person name="Komatsu T."/>
            <person name="Mizushima-Sugano J."/>
            <person name="Satoh T."/>
            <person name="Shirai Y."/>
            <person name="Takahashi Y."/>
            <person name="Nakagawa K."/>
            <person name="Okumura K."/>
            <person name="Nagase T."/>
            <person name="Nomura N."/>
            <person name="Kikuchi H."/>
            <person name="Masuho Y."/>
            <person name="Yamashita R."/>
            <person name="Nakai K."/>
            <person name="Yada T."/>
            <person name="Nakamura Y."/>
            <person name="Ohara O."/>
            <person name="Isogai T."/>
            <person name="Sugano S."/>
        </authorList>
    </citation>
    <scope>NUCLEOTIDE SEQUENCE [LARGE SCALE MRNA] (ISOFORM 4)</scope>
    <scope>NUCLEOTIDE SEQUENCE [LARGE SCALE MRNA] OF 319-1330</scope>
    <source>
        <tissue>Brain</tissue>
        <tissue>Mammary gland</tissue>
        <tissue>Uterus</tissue>
    </source>
</reference>
<reference key="4">
    <citation type="journal article" date="2007" name="BMC Genomics">
        <title>The full-ORF clone resource of the German cDNA consortium.</title>
        <authorList>
            <person name="Bechtel S."/>
            <person name="Rosenfelder H."/>
            <person name="Duda A."/>
            <person name="Schmidt C.P."/>
            <person name="Ernst U."/>
            <person name="Wellenreuther R."/>
            <person name="Mehrle A."/>
            <person name="Schuster C."/>
            <person name="Bahr A."/>
            <person name="Bloecker H."/>
            <person name="Heubner D."/>
            <person name="Hoerlein A."/>
            <person name="Michel G."/>
            <person name="Wedler H."/>
            <person name="Koehrer K."/>
            <person name="Ottenwaelder B."/>
            <person name="Poustka A."/>
            <person name="Wiemann S."/>
            <person name="Schupp I."/>
        </authorList>
    </citation>
    <scope>NUCLEOTIDE SEQUENCE [LARGE SCALE MRNA] (ISOFORM 3)</scope>
    <scope>NUCLEOTIDE SEQUENCE [LARGE SCALE MRNA] OF 555-1330 (ISOFORM 6)</scope>
    <source>
        <tissue>Fetal kidney</tissue>
        <tissue>Lymph node</tissue>
    </source>
</reference>
<reference key="5">
    <citation type="journal article" date="2004" name="Genome Res.">
        <title>The status, quality, and expansion of the NIH full-length cDNA project: the Mammalian Gene Collection (MGC).</title>
        <authorList>
            <consortium name="The MGC Project Team"/>
        </authorList>
    </citation>
    <scope>NUCLEOTIDE SEQUENCE [LARGE SCALE MRNA] (ISOFORM 7)</scope>
    <source>
        <tissue>Salivary gland</tissue>
    </source>
</reference>
<reference key="6">
    <citation type="journal article" date="2010" name="Am. J. Physiol.">
        <title>Nephrocystin-3 is required for ciliary function in zebrafish embryos.</title>
        <authorList>
            <person name="Zhou W."/>
            <person name="Dai J."/>
            <person name="Attanasio M."/>
            <person name="Hildebrandt F."/>
        </authorList>
    </citation>
    <scope>SUBCELLULAR LOCATION</scope>
</reference>
<reference key="7">
    <citation type="journal article" date="2011" name="Genes Dev.">
        <title>An ARL3-UNC119-RP2 GTPase cycle targets myristoylated NPHP3 to the primary cilium.</title>
        <authorList>
            <person name="Wright K.J."/>
            <person name="Baye L.M."/>
            <person name="Olivier-Mason A."/>
            <person name="Mukhopadhyay S."/>
            <person name="Sang L."/>
            <person name="Kwong M."/>
            <person name="Wang W."/>
            <person name="Pretorius P.R."/>
            <person name="Sheffield V.C."/>
            <person name="Sengupta P."/>
            <person name="Slusarski D.C."/>
            <person name="Jackson P.K."/>
        </authorList>
    </citation>
    <scope>MYRISTOYLATION AT GLY-2</scope>
    <scope>INTERACTION WITH UNC119 AND UNC119B</scope>
    <scope>SUBCELLULAR LOCATION</scope>
</reference>
<reference key="8">
    <citation type="journal article" date="2012" name="Cell">
        <title>Exome capture reveals ZNF423 and CEP164 mutations, linking renal ciliopathies to DNA damage response signaling.</title>
        <authorList>
            <person name="Chaki M."/>
            <person name="Airik R."/>
            <person name="Ghosh A.K."/>
            <person name="Giles R.H."/>
            <person name="Chen R."/>
            <person name="Slaats G.G."/>
            <person name="Wang H."/>
            <person name="Hurd T.W."/>
            <person name="Zhou W."/>
            <person name="Cluckey A."/>
            <person name="Gee H.Y."/>
            <person name="Ramaswami G."/>
            <person name="Hong C.J."/>
            <person name="Hamilton B.A."/>
            <person name="Cervenka I."/>
            <person name="Ganji R.S."/>
            <person name="Bryja V."/>
            <person name="Arts H.H."/>
            <person name="van Reeuwijk J."/>
            <person name="Oud M.M."/>
            <person name="Letteboer S.J."/>
            <person name="Roepman R."/>
            <person name="Husson H."/>
            <person name="Ibraghimov-Beskrovnaya O."/>
            <person name="Yasunaga T."/>
            <person name="Walz G."/>
            <person name="Eley L."/>
            <person name="Sayer J.A."/>
            <person name="Schermer B."/>
            <person name="Liebau M.C."/>
            <person name="Benzing T."/>
            <person name="Le Corre S."/>
            <person name="Drummond I."/>
            <person name="Janssen S."/>
            <person name="Allen S.J."/>
            <person name="Natarajan S."/>
            <person name="O'Toole J.F."/>
            <person name="Attanasio M."/>
            <person name="Saunier S."/>
            <person name="Antignac C."/>
            <person name="Koenekoop R.K."/>
            <person name="Ren H."/>
            <person name="Lopez I."/>
            <person name="Nayir A."/>
            <person name="Stoetzel C."/>
            <person name="Dollfus H."/>
            <person name="Massoudi R."/>
            <person name="Gleeson J.G."/>
            <person name="Andreoli S.P."/>
            <person name="Doherty D.G."/>
            <person name="Lindstrad A."/>
            <person name="Golzio C."/>
            <person name="Katsanis N."/>
            <person name="Pape L."/>
            <person name="Abboud E.B."/>
            <person name="Al-Rajhi A.A."/>
            <person name="Lewis R.A."/>
            <person name="Omran H."/>
            <person name="Lee E.Y."/>
            <person name="Wang S."/>
            <person name="Sekiguchi J.M."/>
            <person name="Saunders R."/>
            <person name="Johnson C.A."/>
            <person name="Garner E."/>
            <person name="Vanselow K."/>
            <person name="Andersen J.S."/>
            <person name="Shlomai J."/>
            <person name="Nurnberg G."/>
            <person name="Nurnberg P."/>
            <person name="Levy S."/>
            <person name="Smogorzewska A."/>
            <person name="Otto E.A."/>
            <person name="Hildebrandt F."/>
        </authorList>
    </citation>
    <scope>INTERACTION WITH CEP164</scope>
</reference>
<reference key="9">
    <citation type="journal article" date="2013" name="Hum. Mol. Genet.">
        <title>Mutations in NEK8 link multiple organ dysplasia with altered Hippo signalling and increased c-MYC expression.</title>
        <authorList>
            <person name="Frank V."/>
            <person name="Habbig S."/>
            <person name="Bartram M.P."/>
            <person name="Eisenberger T."/>
            <person name="Veenstra-Knol H.E."/>
            <person name="Decker C."/>
            <person name="Boorsma R.A."/>
            <person name="Goebel H."/>
            <person name="Nuernberg G."/>
            <person name="Griessmann A."/>
            <person name="Franke M."/>
            <person name="Borgal L."/>
            <person name="Kohli P."/>
            <person name="Voelker L.A."/>
            <person name="Doetsch J."/>
            <person name="Nuernberg P."/>
            <person name="Benzing T."/>
            <person name="Bolz H.J."/>
            <person name="Johnson C."/>
            <person name="Gerkes E.H."/>
            <person name="Schermer B."/>
            <person name="Bergmann C."/>
        </authorList>
    </citation>
    <scope>INTERACTION WITH NEK8</scope>
</reference>
<reference key="10">
    <citation type="journal article" date="2013" name="Nat. Genet.">
        <title>ANKS6 is a central component of a nephronophthisis module linking NEK8 to INVS and NPHP3.</title>
        <authorList>
            <person name="Hoff S."/>
            <person name="Halbritter J."/>
            <person name="Epting D."/>
            <person name="Frank V."/>
            <person name="Nguyen T.M."/>
            <person name="van Reeuwijk J."/>
            <person name="Boehlke C."/>
            <person name="Schell C."/>
            <person name="Yasunaga T."/>
            <person name="Helmstadter M."/>
            <person name="Mergen M."/>
            <person name="Filhol E."/>
            <person name="Boldt K."/>
            <person name="Horn N."/>
            <person name="Ueffing M."/>
            <person name="Otto E.A."/>
            <person name="Eisenberger T."/>
            <person name="Elting M.W."/>
            <person name="van Wijk J.A."/>
            <person name="Bockenhauer D."/>
            <person name="Sebire N.J."/>
            <person name="Rittig S."/>
            <person name="Vyberg M."/>
            <person name="Ring T."/>
            <person name="Pohl M."/>
            <person name="Pape L."/>
            <person name="Neuhaus T.J."/>
            <person name="Elshakhs N.A."/>
            <person name="Koon S.J."/>
            <person name="Harris P.C."/>
            <person name="Grahammer F."/>
            <person name="Huber T.B."/>
            <person name="Kuehn E.W."/>
            <person name="Kramer-Zucker A."/>
            <person name="Bolz H.J."/>
            <person name="Roepman R."/>
            <person name="Saunier S."/>
            <person name="Walz G."/>
            <person name="Hildebrandt F."/>
            <person name="Bergmann C."/>
            <person name="Lienkamp S.S."/>
        </authorList>
    </citation>
    <scope>INTERACTION WITH ANKS6; INVS AND NEK8</scope>
</reference>
<reference key="11">
    <citation type="journal article" date="2008" name="Am. J. Hum. Genet.">
        <title>Loss of nephrocystin-3 function can cause embryonic lethality, Meckel-Gruber-like syndrome, situs inversus, and renal-hepatic-pancreatic dysplasia.</title>
        <authorList>
            <person name="Bergmann C."/>
            <person name="Fliegauf M."/>
            <person name="Bruechle N.O."/>
            <person name="Frank V."/>
            <person name="Olbrich H."/>
            <person name="Kirschner J."/>
            <person name="Schermer B."/>
            <person name="Schmedding I."/>
            <person name="Kispert A."/>
            <person name="Kraenzlin B."/>
            <person name="Nuernberg G."/>
            <person name="Becker C."/>
            <person name="Grimm T."/>
            <person name="Girschick G."/>
            <person name="Lynch S.A."/>
            <person name="Kelehan P."/>
            <person name="Senderek J."/>
            <person name="Neuhaus T.J."/>
            <person name="Stallmach T."/>
            <person name="Zentgraf H."/>
            <person name="Nuernberg P."/>
            <person name="Gretz N."/>
            <person name="Lo C."/>
            <person name="Lienkamp S."/>
            <person name="Schaefer T."/>
            <person name="Walz G."/>
            <person name="Benzing T."/>
            <person name="Zerres K."/>
            <person name="Omran H."/>
        </authorList>
    </citation>
    <scope>VARIANT RHPD1 GLN-973</scope>
    <scope>INVOLVEMENT IN MKS7</scope>
    <scope>FUNCTION</scope>
    <scope>INTERACTION WITH INVS</scope>
</reference>
<gene>
    <name type="primary">NPHP3</name>
    <name type="synonym">KIAA2000</name>
</gene>
<keyword id="KW-0002">3D-structure</keyword>
<keyword id="KW-0025">Alternative splicing</keyword>
<keyword id="KW-0966">Cell projection</keyword>
<keyword id="KW-1186">Ciliopathy</keyword>
<keyword id="KW-0969">Cilium</keyword>
<keyword id="KW-0175">Coiled coil</keyword>
<keyword id="KW-0225">Disease variant</keyword>
<keyword id="KW-0449">Lipoprotein</keyword>
<keyword id="KW-0981">Meckel syndrome</keyword>
<keyword id="KW-0519">Myristate</keyword>
<keyword id="KW-0983">Nephronophthisis</keyword>
<keyword id="KW-1267">Proteomics identification</keyword>
<keyword id="KW-1185">Reference proteome</keyword>
<keyword id="KW-0677">Repeat</keyword>
<keyword id="KW-0802">TPR repeat</keyword>
<keyword id="KW-0879">Wnt signaling pathway</keyword>
<protein>
    <recommendedName>
        <fullName>Nephrocystin-3</fullName>
    </recommendedName>
</protein>